<dbReference type="EMBL" id="X52482">
    <property type="protein sequence ID" value="CAA36726.1"/>
    <property type="molecule type" value="Genomic_DNA"/>
</dbReference>
<dbReference type="EMBL" id="D13228">
    <property type="protein sequence ID" value="BAA02508.1"/>
    <property type="molecule type" value="Genomic_DNA"/>
</dbReference>
<dbReference type="EMBL" id="X87941">
    <property type="protein sequence ID" value="CAA61183.1"/>
    <property type="molecule type" value="Genomic_DNA"/>
</dbReference>
<dbReference type="EMBL" id="Z73018">
    <property type="protein sequence ID" value="CAA97261.1"/>
    <property type="molecule type" value="Genomic_DNA"/>
</dbReference>
<dbReference type="EMBL" id="S61041">
    <property type="protein sequence ID" value="AAD13922.1"/>
    <property type="molecule type" value="Genomic_DNA"/>
</dbReference>
<dbReference type="EMBL" id="BK006941">
    <property type="protein sequence ID" value="DAA08324.1"/>
    <property type="molecule type" value="Genomic_DNA"/>
</dbReference>
<dbReference type="PIR" id="S57698">
    <property type="entry name" value="S57698"/>
</dbReference>
<dbReference type="RefSeq" id="NP_011749.3">
    <property type="nucleotide sequence ID" value="NM_001181362.3"/>
</dbReference>
<dbReference type="SMR" id="P17442"/>
<dbReference type="BioGRID" id="33485">
    <property type="interactions" value="82"/>
</dbReference>
<dbReference type="DIP" id="DIP-5959N"/>
<dbReference type="FunCoup" id="P17442">
    <property type="interactions" value="282"/>
</dbReference>
<dbReference type="IntAct" id="P17442">
    <property type="interactions" value="20"/>
</dbReference>
<dbReference type="MINT" id="P17442"/>
<dbReference type="STRING" id="4932.YGR233C"/>
<dbReference type="BindingDB" id="P17442"/>
<dbReference type="ChEMBL" id="CHEMBL1250353"/>
<dbReference type="iPTMnet" id="P17442"/>
<dbReference type="PaxDb" id="4932-YGR233C"/>
<dbReference type="PeptideAtlas" id="P17442"/>
<dbReference type="EnsemblFungi" id="YGR233C_mRNA">
    <property type="protein sequence ID" value="YGR233C"/>
    <property type="gene ID" value="YGR233C"/>
</dbReference>
<dbReference type="GeneID" id="853148"/>
<dbReference type="KEGG" id="sce:YGR233C"/>
<dbReference type="AGR" id="SGD:S000003465"/>
<dbReference type="SGD" id="S000003465">
    <property type="gene designation" value="PHO81"/>
</dbReference>
<dbReference type="VEuPathDB" id="FungiDB:YGR233C"/>
<dbReference type="eggNOG" id="KOG0504">
    <property type="taxonomic scope" value="Eukaryota"/>
</dbReference>
<dbReference type="eggNOG" id="KOG1161">
    <property type="taxonomic scope" value="Eukaryota"/>
</dbReference>
<dbReference type="eggNOG" id="KOG2421">
    <property type="taxonomic scope" value="Eukaryota"/>
</dbReference>
<dbReference type="HOGENOM" id="CLU_002842_1_0_1"/>
<dbReference type="InParanoid" id="P17442"/>
<dbReference type="OMA" id="LCTALNW"/>
<dbReference type="OrthoDB" id="1577640at2759"/>
<dbReference type="BioCyc" id="YEAST:G3O-30911-MONOMER"/>
<dbReference type="Reactome" id="R-SCE-204005">
    <property type="pathway name" value="COPII-mediated vesicle transport"/>
</dbReference>
<dbReference type="Reactome" id="R-SCE-3295583">
    <property type="pathway name" value="TRP channels"/>
</dbReference>
<dbReference type="Reactome" id="R-SCE-983168">
    <property type="pathway name" value="Antigen processing: Ubiquitination &amp; Proteasome degradation"/>
</dbReference>
<dbReference type="BioGRID-ORCS" id="853148">
    <property type="hits" value="1 hit in 10 CRISPR screens"/>
</dbReference>
<dbReference type="PRO" id="PR:P17442"/>
<dbReference type="Proteomes" id="UP000002311">
    <property type="component" value="Chromosome VII"/>
</dbReference>
<dbReference type="RNAct" id="P17442">
    <property type="molecule type" value="protein"/>
</dbReference>
<dbReference type="GO" id="GO:0005737">
    <property type="term" value="C:cytoplasm"/>
    <property type="evidence" value="ECO:0007005"/>
    <property type="project" value="SGD"/>
</dbReference>
<dbReference type="GO" id="GO:0005829">
    <property type="term" value="C:cytosol"/>
    <property type="evidence" value="ECO:0007005"/>
    <property type="project" value="SGD"/>
</dbReference>
<dbReference type="GO" id="GO:0005634">
    <property type="term" value="C:nucleus"/>
    <property type="evidence" value="ECO:0000314"/>
    <property type="project" value="SGD"/>
</dbReference>
<dbReference type="GO" id="GO:0004861">
    <property type="term" value="F:cyclin-dependent protein serine/threonine kinase inhibitor activity"/>
    <property type="evidence" value="ECO:0000315"/>
    <property type="project" value="SGD"/>
</dbReference>
<dbReference type="GO" id="GO:0008081">
    <property type="term" value="F:phosphoric diester hydrolase activity"/>
    <property type="evidence" value="ECO:0007669"/>
    <property type="project" value="InterPro"/>
</dbReference>
<dbReference type="GO" id="GO:0016036">
    <property type="term" value="P:cellular response to phosphate starvation"/>
    <property type="evidence" value="ECO:0000315"/>
    <property type="project" value="SGD"/>
</dbReference>
<dbReference type="GO" id="GO:0006629">
    <property type="term" value="P:lipid metabolic process"/>
    <property type="evidence" value="ECO:0007669"/>
    <property type="project" value="InterPro"/>
</dbReference>
<dbReference type="GO" id="GO:0006796">
    <property type="term" value="P:phosphate-containing compound metabolic process"/>
    <property type="evidence" value="ECO:0000315"/>
    <property type="project" value="SGD"/>
</dbReference>
<dbReference type="CDD" id="cd08578">
    <property type="entry name" value="GDPD_NUC-2_fungi"/>
    <property type="match status" value="1"/>
</dbReference>
<dbReference type="CDD" id="cd14483">
    <property type="entry name" value="SPX_PHO81_NUC-2_like"/>
    <property type="match status" value="1"/>
</dbReference>
<dbReference type="Gene3D" id="1.25.40.20">
    <property type="entry name" value="Ankyrin repeat-containing domain"/>
    <property type="match status" value="2"/>
</dbReference>
<dbReference type="Gene3D" id="3.20.20.190">
    <property type="entry name" value="Phosphatidylinositol (PI) phosphodiesterase"/>
    <property type="match status" value="1"/>
</dbReference>
<dbReference type="InterPro" id="IPR002110">
    <property type="entry name" value="Ankyrin_rpt"/>
</dbReference>
<dbReference type="InterPro" id="IPR036770">
    <property type="entry name" value="Ankyrin_rpt-contain_sf"/>
</dbReference>
<dbReference type="InterPro" id="IPR030395">
    <property type="entry name" value="GP_PDE_dom"/>
</dbReference>
<dbReference type="InterPro" id="IPR017946">
    <property type="entry name" value="PLC-like_Pdiesterase_TIM-brl"/>
</dbReference>
<dbReference type="InterPro" id="IPR004331">
    <property type="entry name" value="SPX_dom"/>
</dbReference>
<dbReference type="PANTHER" id="PTHR24198">
    <property type="entry name" value="ANKYRIN REPEAT AND PROTEIN KINASE DOMAIN-CONTAINING PROTEIN"/>
    <property type="match status" value="1"/>
</dbReference>
<dbReference type="PANTHER" id="PTHR24198:SF165">
    <property type="entry name" value="ANKYRIN REPEAT-CONTAINING PROTEIN-RELATED"/>
    <property type="match status" value="1"/>
</dbReference>
<dbReference type="Pfam" id="PF12796">
    <property type="entry name" value="Ank_2"/>
    <property type="match status" value="2"/>
</dbReference>
<dbReference type="Pfam" id="PF25329">
    <property type="entry name" value="C2_GDE1"/>
    <property type="match status" value="1"/>
</dbReference>
<dbReference type="Pfam" id="PF03105">
    <property type="entry name" value="SPX"/>
    <property type="match status" value="2"/>
</dbReference>
<dbReference type="SMART" id="SM00248">
    <property type="entry name" value="ANK"/>
    <property type="match status" value="6"/>
</dbReference>
<dbReference type="SUPFAM" id="SSF48403">
    <property type="entry name" value="Ankyrin repeat"/>
    <property type="match status" value="1"/>
</dbReference>
<dbReference type="PROSITE" id="PS50297">
    <property type="entry name" value="ANK_REP_REGION"/>
    <property type="match status" value="1"/>
</dbReference>
<dbReference type="PROSITE" id="PS50088">
    <property type="entry name" value="ANK_REPEAT"/>
    <property type="match status" value="2"/>
</dbReference>
<dbReference type="PROSITE" id="PS51704">
    <property type="entry name" value="GP_PDE"/>
    <property type="match status" value="1"/>
</dbReference>
<dbReference type="PROSITE" id="PS51382">
    <property type="entry name" value="SPX"/>
    <property type="match status" value="1"/>
</dbReference>
<gene>
    <name type="primary">PHO81</name>
    <name type="ordered locus">YGR233C</name>
    <name type="ORF">G8567</name>
</gene>
<organism>
    <name type="scientific">Saccharomyces cerevisiae (strain ATCC 204508 / S288c)</name>
    <name type="common">Baker's yeast</name>
    <dbReference type="NCBI Taxonomy" id="559292"/>
    <lineage>
        <taxon>Eukaryota</taxon>
        <taxon>Fungi</taxon>
        <taxon>Dikarya</taxon>
        <taxon>Ascomycota</taxon>
        <taxon>Saccharomycotina</taxon>
        <taxon>Saccharomycetes</taxon>
        <taxon>Saccharomycetales</taxon>
        <taxon>Saccharomycetaceae</taxon>
        <taxon>Saccharomyces</taxon>
    </lineage>
</organism>
<proteinExistence type="evidence at protein level"/>
<name>PHO81_YEAST</name>
<evidence type="ECO:0000255" key="1">
    <source>
        <dbReference type="PROSITE-ProRule" id="PRU00714"/>
    </source>
</evidence>
<evidence type="ECO:0000256" key="2">
    <source>
        <dbReference type="SAM" id="MobiDB-lite"/>
    </source>
</evidence>
<evidence type="ECO:0000269" key="3">
    <source>
    </source>
</evidence>
<evidence type="ECO:0000269" key="4">
    <source>
    </source>
</evidence>
<evidence type="ECO:0000269" key="5">
    <source>
    </source>
</evidence>
<evidence type="ECO:0000269" key="6">
    <source>
    </source>
</evidence>
<evidence type="ECO:0000269" key="7">
    <source>
    </source>
</evidence>
<evidence type="ECO:0000269" key="8">
    <source>
    </source>
</evidence>
<evidence type="ECO:0000305" key="9"/>
<evidence type="ECO:0007744" key="10">
    <source>
    </source>
</evidence>
<reference key="1">
    <citation type="journal article" date="1990" name="Nucleic Acids Res.">
        <title>Nucleotide sequence of the PHO81 gene involved in the regulation of the repressible acid phosphatase gene in Saccharomyces cerevisiae.</title>
        <authorList>
            <person name="Coche T."/>
            <person name="Prozzi D."/>
            <person name="Legrain M."/>
            <person name="Hilger F."/>
            <person name="Vandenhaute J."/>
        </authorList>
    </citation>
    <scope>NUCLEOTIDE SEQUENCE [GENOMIC DNA]</scope>
    <source>
        <strain>S288c / GRF88</strain>
    </source>
</reference>
<reference key="2">
    <citation type="journal article" date="1993" name="Mol. Gen. Genet.">
        <title>Promoter analysis of the PHO81 gene encoding a 134 kDa protein bearing ankyrin repeats in the phosphatase regulon of Saccharomyces cerevisiae.</title>
        <authorList>
            <person name="Ogawa N."/>
            <person name="Noguchi K."/>
            <person name="Yamashita Y."/>
            <person name="Yasuhara T."/>
            <person name="Hayashi N."/>
            <person name="Yoshida K."/>
            <person name="Oshima Y."/>
        </authorList>
    </citation>
    <scope>NUCLEOTIDE SEQUENCE [GENOMIC DNA]</scope>
</reference>
<reference key="3">
    <citation type="journal article" date="1996" name="Yeast">
        <title>Sequence analysis of the 43 kb CRM1-YLM9-PET54-DIE2-SMI1-PHO81-YHB4-PFK1 region from the right arm of Saccharomyces cerevisiae chromosome VII.</title>
        <authorList>
            <person name="van der Aart Q.J.M."/>
            <person name="Kleine K."/>
            <person name="Steensma H.Y."/>
        </authorList>
    </citation>
    <scope>NUCLEOTIDE SEQUENCE [GENOMIC DNA]</scope>
    <source>
        <strain>ATCC 204508 / S288c</strain>
    </source>
</reference>
<reference key="4">
    <citation type="journal article" date="1997" name="Nature">
        <title>The nucleotide sequence of Saccharomyces cerevisiae chromosome VII.</title>
        <authorList>
            <person name="Tettelin H."/>
            <person name="Agostoni-Carbone M.L."/>
            <person name="Albermann K."/>
            <person name="Albers M."/>
            <person name="Arroyo J."/>
            <person name="Backes U."/>
            <person name="Barreiros T."/>
            <person name="Bertani I."/>
            <person name="Bjourson A.J."/>
            <person name="Brueckner M."/>
            <person name="Bruschi C.V."/>
            <person name="Carignani G."/>
            <person name="Castagnoli L."/>
            <person name="Cerdan E."/>
            <person name="Clemente M.L."/>
            <person name="Coblenz A."/>
            <person name="Coglievina M."/>
            <person name="Coissac E."/>
            <person name="Defoor E."/>
            <person name="Del Bino S."/>
            <person name="Delius H."/>
            <person name="Delneri D."/>
            <person name="de Wergifosse P."/>
            <person name="Dujon B."/>
            <person name="Durand P."/>
            <person name="Entian K.-D."/>
            <person name="Eraso P."/>
            <person name="Escribano V."/>
            <person name="Fabiani L."/>
            <person name="Fartmann B."/>
            <person name="Feroli F."/>
            <person name="Feuermann M."/>
            <person name="Frontali L."/>
            <person name="Garcia-Gonzalez M."/>
            <person name="Garcia-Saez M.I."/>
            <person name="Goffeau A."/>
            <person name="Guerreiro P."/>
            <person name="Hani J."/>
            <person name="Hansen M."/>
            <person name="Hebling U."/>
            <person name="Hernandez K."/>
            <person name="Heumann K."/>
            <person name="Hilger F."/>
            <person name="Hofmann B."/>
            <person name="Indge K.J."/>
            <person name="James C.M."/>
            <person name="Klima R."/>
            <person name="Koetter P."/>
            <person name="Kramer B."/>
            <person name="Kramer W."/>
            <person name="Lauquin G."/>
            <person name="Leuther H."/>
            <person name="Louis E.J."/>
            <person name="Maillier E."/>
            <person name="Marconi A."/>
            <person name="Martegani E."/>
            <person name="Mazon M.J."/>
            <person name="Mazzoni C."/>
            <person name="McReynolds A.D.K."/>
            <person name="Melchioretto P."/>
            <person name="Mewes H.-W."/>
            <person name="Minenkova O."/>
            <person name="Mueller-Auer S."/>
            <person name="Nawrocki A."/>
            <person name="Netter P."/>
            <person name="Neu R."/>
            <person name="Nombela C."/>
            <person name="Oliver S.G."/>
            <person name="Panzeri L."/>
            <person name="Paoluzi S."/>
            <person name="Plevani P."/>
            <person name="Portetelle D."/>
            <person name="Portillo F."/>
            <person name="Potier S."/>
            <person name="Purnelle B."/>
            <person name="Rieger M."/>
            <person name="Riles L."/>
            <person name="Rinaldi T."/>
            <person name="Robben J."/>
            <person name="Rodrigues-Pousada C."/>
            <person name="Rodriguez-Belmonte E."/>
            <person name="Rodriguez-Torres A.M."/>
            <person name="Rose M."/>
            <person name="Ruzzi M."/>
            <person name="Saliola M."/>
            <person name="Sanchez-Perez M."/>
            <person name="Schaefer B."/>
            <person name="Schaefer M."/>
            <person name="Scharfe M."/>
            <person name="Schmidheini T."/>
            <person name="Schreer A."/>
            <person name="Skala J."/>
            <person name="Souciet J.-L."/>
            <person name="Steensma H.Y."/>
            <person name="Talla E."/>
            <person name="Thierry A."/>
            <person name="Vandenbol M."/>
            <person name="van der Aart Q.J.M."/>
            <person name="Van Dyck L."/>
            <person name="Vanoni M."/>
            <person name="Verhasselt P."/>
            <person name="Voet M."/>
            <person name="Volckaert G."/>
            <person name="Wambutt R."/>
            <person name="Watson M.D."/>
            <person name="Weber N."/>
            <person name="Wedler E."/>
            <person name="Wedler H."/>
            <person name="Wipfli P."/>
            <person name="Wolf K."/>
            <person name="Wright L.F."/>
            <person name="Zaccaria P."/>
            <person name="Zimmermann M."/>
            <person name="Zollner A."/>
            <person name="Kleine K."/>
        </authorList>
    </citation>
    <scope>NUCLEOTIDE SEQUENCE [LARGE SCALE GENOMIC DNA]</scope>
    <source>
        <strain>ATCC 204508 / S288c</strain>
    </source>
</reference>
<reference key="5">
    <citation type="journal article" date="2014" name="G3 (Bethesda)">
        <title>The reference genome sequence of Saccharomyces cerevisiae: Then and now.</title>
        <authorList>
            <person name="Engel S.R."/>
            <person name="Dietrich F.S."/>
            <person name="Fisk D.G."/>
            <person name="Binkley G."/>
            <person name="Balakrishnan R."/>
            <person name="Costanzo M.C."/>
            <person name="Dwight S.S."/>
            <person name="Hitz B.C."/>
            <person name="Karra K."/>
            <person name="Nash R.S."/>
            <person name="Weng S."/>
            <person name="Wong E.D."/>
            <person name="Lloyd P."/>
            <person name="Skrzypek M.S."/>
            <person name="Miyasato S.R."/>
            <person name="Simison M."/>
            <person name="Cherry J.M."/>
        </authorList>
    </citation>
    <scope>GENOME REANNOTATION</scope>
    <source>
        <strain>ATCC 204508 / S288c</strain>
    </source>
</reference>
<reference key="6">
    <citation type="journal article" date="1993" name="Nucleic Acids Res.">
        <title>Molecular analysis of the PHO81 gene of Saccharomyces cerevisiae.</title>
        <authorList>
            <person name="Creasy C.L."/>
            <person name="Madden S.L."/>
            <person name="Bergman L.W."/>
        </authorList>
    </citation>
    <scope>NUCLEOTIDE SEQUENCE [GENOMIC DNA] OF 1-10</scope>
    <scope>CHARACTERIZATION</scope>
</reference>
<reference key="7">
    <citation type="journal article" date="1994" name="EMBO J.">
        <title>The transcription factor, the Cdk, its cyclin and their regulator: directing the transcriptional response to a nutritional signal.</title>
        <authorList>
            <person name="Hirst K."/>
            <person name="Fisher F."/>
            <person name="McAndrew P.C."/>
            <person name="Goding C.R."/>
        </authorList>
    </citation>
    <scope>FUNCTION</scope>
    <scope>INTERACTION WITH PHO4 AND PHO80</scope>
</reference>
<reference key="8">
    <citation type="journal article" date="1994" name="Science">
        <title>Phosphate-regulated inactivation of the kinase PHO80-PHO85 by the CDK inhibitor PHO81.</title>
        <authorList>
            <person name="Schneider K.R."/>
            <person name="Smith R.L."/>
            <person name="O'Shea E.K."/>
        </authorList>
    </citation>
    <scope>FUNCTION</scope>
    <scope>INTERACTION WITH PHO80</scope>
</reference>
<reference key="9">
    <citation type="journal article" date="2000" name="Mol. Microbiol.">
        <title>Regulation of the Pcl7-Pho85 cyclin-cdk complex by Pho81.</title>
        <authorList>
            <person name="Lee M."/>
            <person name="O'Regan S."/>
            <person name="Moreau J.-L."/>
            <person name="Johnson A.L."/>
            <person name="Johnston L.H."/>
            <person name="Goding C.R."/>
        </authorList>
    </citation>
    <scope>FUNCTION</scope>
    <scope>INTERACTION WITH PCL7</scope>
</reference>
<reference key="10">
    <citation type="journal article" date="2003" name="Nature">
        <title>Global analysis of protein localization in budding yeast.</title>
        <authorList>
            <person name="Huh W.-K."/>
            <person name="Falvo J.V."/>
            <person name="Gerke L.C."/>
            <person name="Carroll A.S."/>
            <person name="Howson R.W."/>
            <person name="Weissman J.S."/>
            <person name="O'Shea E.K."/>
        </authorList>
    </citation>
    <scope>SUBCELLULAR LOCATION [LARGE SCALE ANALYSIS]</scope>
</reference>
<reference key="11">
    <citation type="journal article" date="2003" name="Nature">
        <title>Global analysis of protein expression in yeast.</title>
        <authorList>
            <person name="Ghaemmaghami S."/>
            <person name="Huh W.-K."/>
            <person name="Bower K."/>
            <person name="Howson R.W."/>
            <person name="Belle A."/>
            <person name="Dephoure N."/>
            <person name="O'Shea E.K."/>
            <person name="Weissman J.S."/>
        </authorList>
    </citation>
    <scope>LEVEL OF PROTEIN EXPRESSION [LARGE SCALE ANALYSIS]</scope>
</reference>
<reference key="12">
    <citation type="journal article" date="2004" name="Curr. Genet.">
        <title>The yeast Pho80-Pho85 cyclin-CDK complex has multiple substrates.</title>
        <authorList>
            <person name="Waters N.C."/>
            <person name="Knight J.P."/>
            <person name="Creasy C.L."/>
            <person name="Bergman L.W."/>
        </authorList>
    </citation>
    <scope>PHOSPHORYLATION</scope>
</reference>
<reference key="13">
    <citation type="journal article" date="2004" name="Curr. Genet.">
        <title>Regulation by phosphorylation of Pho81p, a cyclin-dependent kinase inhibitor in Saccharomyces cerevisiae.</title>
        <authorList>
            <person name="Knight J.P."/>
            <person name="Daly T.M."/>
            <person name="Bergman L.W."/>
        </authorList>
    </citation>
    <scope>PHOSPHORYLATION</scope>
    <scope>SUBCELLULAR LOCATION</scope>
</reference>
<reference key="14">
    <citation type="journal article" date="2008" name="Mol. Cell. Proteomics">
        <title>A multidimensional chromatography technology for in-depth phosphoproteome analysis.</title>
        <authorList>
            <person name="Albuquerque C.P."/>
            <person name="Smolka M.B."/>
            <person name="Payne S.H."/>
            <person name="Bafna V."/>
            <person name="Eng J."/>
            <person name="Zhou H."/>
        </authorList>
    </citation>
    <scope>PHOSPHORYLATION [LARGE SCALE ANALYSIS] AT SER-956</scope>
    <scope>IDENTIFICATION BY MASS SPECTROMETRY [LARGE SCALE ANALYSIS]</scope>
</reference>
<reference key="15">
    <citation type="journal article" date="2009" name="Science">
        <title>Global analysis of Cdk1 substrate phosphorylation sites provides insights into evolution.</title>
        <authorList>
            <person name="Holt L.J."/>
            <person name="Tuch B.B."/>
            <person name="Villen J."/>
            <person name="Johnson A.D."/>
            <person name="Gygi S.P."/>
            <person name="Morgan D.O."/>
        </authorList>
    </citation>
    <scope>IDENTIFICATION BY MASS SPECTROMETRY [LARGE SCALE ANALYSIS]</scope>
</reference>
<reference key="16">
    <citation type="journal article" date="2012" name="Proc. Natl. Acad. Sci. U.S.A.">
        <title>N-terminal acetylome analyses and functional insights of the N-terminal acetyltransferase NatB.</title>
        <authorList>
            <person name="Van Damme P."/>
            <person name="Lasa M."/>
            <person name="Polevoda B."/>
            <person name="Gazquez C."/>
            <person name="Elosegui-Artola A."/>
            <person name="Kim D.S."/>
            <person name="De Juan-Pardo E."/>
            <person name="Demeyer K."/>
            <person name="Hole K."/>
            <person name="Larrea E."/>
            <person name="Timmerman E."/>
            <person name="Prieto J."/>
            <person name="Arnesen T."/>
            <person name="Sherman F."/>
            <person name="Gevaert K."/>
            <person name="Aldabe R."/>
        </authorList>
    </citation>
    <scope>IDENTIFICATION BY MASS SPECTROMETRY [LARGE SCALE ANALYSIS]</scope>
</reference>
<protein>
    <recommendedName>
        <fullName>Phosphate system positive regulatory protein PHO81</fullName>
    </recommendedName>
    <alternativeName>
        <fullName>CDK inhibitor PHO81</fullName>
    </alternativeName>
</protein>
<accession>P17442</accession>
<accession>D6VV13</accession>
<accession>Q06887</accession>
<comment type="function">
    <text evidence="3 7 8">Inhibits the kinase activity of the cyclin-CDKs PHO80-PHO85 and PCL7-PHO85 under low-phosphate conditions.</text>
</comment>
<comment type="subunit">
    <text evidence="3 7 8">Associates specifically with the PHO80-PHO85 and PCL7-PHO85 cyclin-CDK complexes, and much of this interaction is mediated through the PHO80 and PCL7 cyclin subunits. Interacts with the transcription factor PHO4.</text>
</comment>
<comment type="interaction">
    <interactant intactId="EBI-13314">
        <id>P17442</id>
    </interactant>
    <interactant intactId="EBI-13327">
        <id>P17157</id>
        <label>PHO85</label>
    </interactant>
    <organismsDiffer>false</organismsDiffer>
    <experiments>7</experiments>
</comment>
<comment type="subcellular location">
    <subcellularLocation>
        <location>Cytoplasm</location>
    </subcellularLocation>
    <subcellularLocation>
        <location>Nucleus</location>
    </subcellularLocation>
    <text>Localizes predominantly to the nucleus in both high- and low-phosphate conditions.</text>
</comment>
<comment type="PTM">
    <text evidence="5 6">Phosphorylated by the cyclin-CDK PHO80-PHO85. Phosphorylation mediates the formation of a stable interaction with the cyclin-CDK and is required for function as an active inhibitor of the complex under phosphate starvation conditions.</text>
</comment>
<comment type="miscellaneous">
    <text evidence="4">Present with 2930 molecules/cell in log phase SD medium.</text>
</comment>
<feature type="chain" id="PRO_0000067075" description="Phosphate system positive regulatory protein PHO81">
    <location>
        <begin position="1"/>
        <end position="1178"/>
    </location>
</feature>
<feature type="domain" description="SPX" evidence="1">
    <location>
        <begin position="1"/>
        <end position="169"/>
    </location>
</feature>
<feature type="repeat" description="ANK 1">
    <location>
        <begin position="423"/>
        <end position="452"/>
    </location>
</feature>
<feature type="repeat" description="ANK 2">
    <location>
        <begin position="458"/>
        <end position="487"/>
    </location>
</feature>
<feature type="repeat" description="ANK 3">
    <location>
        <begin position="506"/>
        <end position="535"/>
    </location>
</feature>
<feature type="repeat" description="ANK 4">
    <location>
        <begin position="556"/>
        <end position="586"/>
    </location>
</feature>
<feature type="repeat" description="ANK 5">
    <location>
        <begin position="591"/>
        <end position="620"/>
    </location>
</feature>
<feature type="repeat" description="ANK 6">
    <location>
        <begin position="624"/>
        <end position="653"/>
    </location>
</feature>
<feature type="domain" description="GP-PDE">
    <location>
        <begin position="871"/>
        <end position="1178"/>
    </location>
</feature>
<feature type="region of interest" description="Disordered" evidence="2">
    <location>
        <begin position="210"/>
        <end position="250"/>
    </location>
</feature>
<feature type="compositionally biased region" description="Low complexity" evidence="2">
    <location>
        <begin position="223"/>
        <end position="250"/>
    </location>
</feature>
<feature type="modified residue" description="Phosphoserine" evidence="10">
    <location>
        <position position="956"/>
    </location>
</feature>
<feature type="sequence conflict" description="In Ref. 2; BAA02508." evidence="9" ref="2">
    <original>N</original>
    <variation>NN</variation>
    <location>
        <position position="248"/>
    </location>
</feature>
<feature type="sequence conflict" description="In Ref. 2; BAA02508." evidence="9" ref="2">
    <original>T</original>
    <variation>I</variation>
    <location>
        <position position="728"/>
    </location>
</feature>
<feature type="sequence conflict" description="In Ref. 2; BAA02508." evidence="9" ref="2">
    <original>S</original>
    <variation>F</variation>
    <location>
        <position position="762"/>
    </location>
</feature>
<feature type="sequence conflict" description="In Ref. 2; BAA02508." evidence="9" ref="2">
    <original>D</original>
    <variation>H</variation>
    <location>
        <position position="845"/>
    </location>
</feature>
<feature type="sequence conflict" description="In Ref. 2; BAA02508." evidence="9" ref="2">
    <original>N</original>
    <variation>K</variation>
    <location>
        <position position="873"/>
    </location>
</feature>
<feature type="sequence conflict" description="In Ref. 1; CAA36726." evidence="9" ref="1">
    <location>
        <position position="920"/>
    </location>
</feature>
<feature type="sequence conflict" description="In Ref. 2; BAA02508." evidence="9" ref="2">
    <original>A</original>
    <variation>V</variation>
    <location>
        <position position="984"/>
    </location>
</feature>
<sequence>MKFGKYLEARQLELAEYNSHFIDYKALKKLIKQLAIPTLKASSDLDLHLTLDDIDEKIIHQRLQENKAAFFFKLERELEKVNGYYLARESDLRIKFNILHSKYKDYKINGKLNSNQATSFKNLYAAFKKFQKDLRNLEQYVELNKTGFSKALKKWDKRSQSHDKDFYLATVVSIQPIFTRDGPLKLNDETLHILLELNDIDNNNRRADIQSSTFTNDDDDDNNTSNNNKHNNNNNNNNNNNNNNNNNNILHNNYELTTSKISENQLEHLFQASSSSLDMEMEIENWYKEILNIATVKDVQRKHALLRNFRETKIFTYLLQNSSESFHKNVFSLLKECLTTLFLLLVASPLDDNSLHIFYKSNQDHIDLSYCDEDDQVFSRKNVFHEAASCPEKSRLFILDEALTTSKLSKETVQKLLNAQDIHSRVPLHYAAELGKLEFVHSLLITNLLEDVDPIDSDSKTPLVLAITNNHIDVVRDLLTIGGANASPIEKPILDYSKNVISSTKVQFDPLNVACKFNNHDAAKLLLEIRSKQNADNAKNKSSQHLCQPLFKKNSTGLCTLHIVAKIGGDPQLIQLLIRYGADPNEIDGFNKWTPIFYAVRSGHSEVITELLKHNARLDIEDDNGHSPLFYALWESHVDVLNALLQRPLNLPSAPLNEINSQSSTQRLNTIDLTPNDDKFDLDIQDSIPDFALPPPIIPLRKYGHNFLEKKIFIKLKLRPGLESIKLTQDNGIIMSSSPGRITLSSNLPEIIPRNVILPVRSGEINNFCKDISETNDEEDDDEISEDHDDGEIIFQVDSIDDFSMDFEIFPSFGTRIIAKTTAMPFLFKKVAINSIATMNLPLFDTRLNNIGSLTLDYQIIFPYPGNPLKIINYEPYWKSTGSDLMTSSKDGNFVTSSSLNGSFISVLVCALNDETIVAAPKPYVEFKGTKILLNDLTKEQLEKVVDYDFGKIDGSFDEVTLKQYLSSRVVPLRSLLEVIPGSAQLVIRVYFPTDKEIDTIPIKISPFININQFIDKLLLIIFEHERFLRHSGSGSMRQIVFSSCNWEACSILNWKQPNFPVLLQMKNLLRDSTTGKFVGDTPNCLKELAVNPQKMSYLNTELINIHTMVQFAMNNNLLGVTLPYEVLKICPSLARIIKQNGLLLIASVGENDQIPADGGYSGIYYACELLFENNIDM</sequence>
<keyword id="KW-0040">ANK repeat</keyword>
<keyword id="KW-0963">Cytoplasm</keyword>
<keyword id="KW-0539">Nucleus</keyword>
<keyword id="KW-0597">Phosphoprotein</keyword>
<keyword id="KW-1185">Reference proteome</keyword>
<keyword id="KW-0677">Repeat</keyword>